<evidence type="ECO:0000255" key="1">
    <source>
        <dbReference type="HAMAP-Rule" id="MF_01318"/>
    </source>
</evidence>
<evidence type="ECO:0000305" key="2"/>
<name>RL1_ALIFM</name>
<sequence length="234" mass="24881">MAKLTKRMRNIREKVEVTKEYDINEAVALLKELATAKFTESVDVAVNLGIDARKSDQNVRGATVLPHGTGRDIRVAVFTQGANAEAAKEAGADLVGMEDLAELVKKGEMNFDVVVASPDAMRVVGQLGTILGPRGLMPNPKVGTVTPNVAEAVKNAKAGQVRYRNDKNGIIHTTIGKVDFDAAQLKENLEALLVALKKAKPTSAKGTFVKKVSISTTMGAGVSLDQATLNTQTN</sequence>
<protein>
    <recommendedName>
        <fullName evidence="1">Large ribosomal subunit protein uL1</fullName>
    </recommendedName>
    <alternativeName>
        <fullName evidence="2">50S ribosomal protein L1</fullName>
    </alternativeName>
</protein>
<proteinExistence type="inferred from homology"/>
<accession>B5FC91</accession>
<comment type="function">
    <text evidence="1">Binds directly to 23S rRNA. The L1 stalk is quite mobile in the ribosome, and is involved in E site tRNA release.</text>
</comment>
<comment type="function">
    <text evidence="1">Protein L1 is also a translational repressor protein, it controls the translation of the L11 operon by binding to its mRNA.</text>
</comment>
<comment type="subunit">
    <text evidence="1">Part of the 50S ribosomal subunit.</text>
</comment>
<comment type="similarity">
    <text evidence="1">Belongs to the universal ribosomal protein uL1 family.</text>
</comment>
<reference key="1">
    <citation type="submission" date="2008-08" db="EMBL/GenBank/DDBJ databases">
        <title>Complete sequence of Vibrio fischeri strain MJ11.</title>
        <authorList>
            <person name="Mandel M.J."/>
            <person name="Stabb E.V."/>
            <person name="Ruby E.G."/>
            <person name="Ferriera S."/>
            <person name="Johnson J."/>
            <person name="Kravitz S."/>
            <person name="Beeson K."/>
            <person name="Sutton G."/>
            <person name="Rogers Y.-H."/>
            <person name="Friedman R."/>
            <person name="Frazier M."/>
            <person name="Venter J.C."/>
        </authorList>
    </citation>
    <scope>NUCLEOTIDE SEQUENCE [LARGE SCALE GENOMIC DNA]</scope>
    <source>
        <strain>MJ11</strain>
    </source>
</reference>
<organism>
    <name type="scientific">Aliivibrio fischeri (strain MJ11)</name>
    <name type="common">Vibrio fischeri</name>
    <dbReference type="NCBI Taxonomy" id="388396"/>
    <lineage>
        <taxon>Bacteria</taxon>
        <taxon>Pseudomonadati</taxon>
        <taxon>Pseudomonadota</taxon>
        <taxon>Gammaproteobacteria</taxon>
        <taxon>Vibrionales</taxon>
        <taxon>Vibrionaceae</taxon>
        <taxon>Aliivibrio</taxon>
    </lineage>
</organism>
<dbReference type="EMBL" id="CP001139">
    <property type="protein sequence ID" value="ACH65344.1"/>
    <property type="molecule type" value="Genomic_DNA"/>
</dbReference>
<dbReference type="RefSeq" id="WP_005421325.1">
    <property type="nucleotide sequence ID" value="NC_011184.1"/>
</dbReference>
<dbReference type="SMR" id="B5FC91"/>
<dbReference type="KEGG" id="vfm:VFMJ11_2533"/>
<dbReference type="HOGENOM" id="CLU_062853_0_0_6"/>
<dbReference type="Proteomes" id="UP000001857">
    <property type="component" value="Chromosome I"/>
</dbReference>
<dbReference type="GO" id="GO:0022625">
    <property type="term" value="C:cytosolic large ribosomal subunit"/>
    <property type="evidence" value="ECO:0007669"/>
    <property type="project" value="TreeGrafter"/>
</dbReference>
<dbReference type="GO" id="GO:0019843">
    <property type="term" value="F:rRNA binding"/>
    <property type="evidence" value="ECO:0007669"/>
    <property type="project" value="UniProtKB-UniRule"/>
</dbReference>
<dbReference type="GO" id="GO:0003735">
    <property type="term" value="F:structural constituent of ribosome"/>
    <property type="evidence" value="ECO:0007669"/>
    <property type="project" value="InterPro"/>
</dbReference>
<dbReference type="GO" id="GO:0000049">
    <property type="term" value="F:tRNA binding"/>
    <property type="evidence" value="ECO:0007669"/>
    <property type="project" value="UniProtKB-KW"/>
</dbReference>
<dbReference type="GO" id="GO:0006417">
    <property type="term" value="P:regulation of translation"/>
    <property type="evidence" value="ECO:0007669"/>
    <property type="project" value="UniProtKB-KW"/>
</dbReference>
<dbReference type="GO" id="GO:0006412">
    <property type="term" value="P:translation"/>
    <property type="evidence" value="ECO:0007669"/>
    <property type="project" value="UniProtKB-UniRule"/>
</dbReference>
<dbReference type="CDD" id="cd00403">
    <property type="entry name" value="Ribosomal_L1"/>
    <property type="match status" value="1"/>
</dbReference>
<dbReference type="FunFam" id="3.40.50.790:FF:000001">
    <property type="entry name" value="50S ribosomal protein L1"/>
    <property type="match status" value="1"/>
</dbReference>
<dbReference type="Gene3D" id="3.30.190.20">
    <property type="match status" value="1"/>
</dbReference>
<dbReference type="Gene3D" id="3.40.50.790">
    <property type="match status" value="1"/>
</dbReference>
<dbReference type="HAMAP" id="MF_01318_B">
    <property type="entry name" value="Ribosomal_uL1_B"/>
    <property type="match status" value="1"/>
</dbReference>
<dbReference type="InterPro" id="IPR005878">
    <property type="entry name" value="Ribosom_uL1_bac-type"/>
</dbReference>
<dbReference type="InterPro" id="IPR002143">
    <property type="entry name" value="Ribosomal_uL1"/>
</dbReference>
<dbReference type="InterPro" id="IPR023674">
    <property type="entry name" value="Ribosomal_uL1-like"/>
</dbReference>
<dbReference type="InterPro" id="IPR028364">
    <property type="entry name" value="Ribosomal_uL1/biogenesis"/>
</dbReference>
<dbReference type="InterPro" id="IPR016095">
    <property type="entry name" value="Ribosomal_uL1_3-a/b-sand"/>
</dbReference>
<dbReference type="InterPro" id="IPR023673">
    <property type="entry name" value="Ribosomal_uL1_CS"/>
</dbReference>
<dbReference type="NCBIfam" id="TIGR01169">
    <property type="entry name" value="rplA_bact"/>
    <property type="match status" value="1"/>
</dbReference>
<dbReference type="PANTHER" id="PTHR36427">
    <property type="entry name" value="54S RIBOSOMAL PROTEIN L1, MITOCHONDRIAL"/>
    <property type="match status" value="1"/>
</dbReference>
<dbReference type="PANTHER" id="PTHR36427:SF3">
    <property type="entry name" value="LARGE RIBOSOMAL SUBUNIT PROTEIN UL1M"/>
    <property type="match status" value="1"/>
</dbReference>
<dbReference type="Pfam" id="PF00687">
    <property type="entry name" value="Ribosomal_L1"/>
    <property type="match status" value="1"/>
</dbReference>
<dbReference type="PIRSF" id="PIRSF002155">
    <property type="entry name" value="Ribosomal_L1"/>
    <property type="match status" value="1"/>
</dbReference>
<dbReference type="SUPFAM" id="SSF56808">
    <property type="entry name" value="Ribosomal protein L1"/>
    <property type="match status" value="1"/>
</dbReference>
<dbReference type="PROSITE" id="PS01199">
    <property type="entry name" value="RIBOSOMAL_L1"/>
    <property type="match status" value="1"/>
</dbReference>
<keyword id="KW-0678">Repressor</keyword>
<keyword id="KW-0687">Ribonucleoprotein</keyword>
<keyword id="KW-0689">Ribosomal protein</keyword>
<keyword id="KW-0694">RNA-binding</keyword>
<keyword id="KW-0699">rRNA-binding</keyword>
<keyword id="KW-0810">Translation regulation</keyword>
<keyword id="KW-0820">tRNA-binding</keyword>
<feature type="chain" id="PRO_1000141480" description="Large ribosomal subunit protein uL1">
    <location>
        <begin position="1"/>
        <end position="234"/>
    </location>
</feature>
<gene>
    <name evidence="1" type="primary">rplA</name>
    <name type="ordered locus">VFMJ11_2533</name>
</gene>